<gene>
    <name evidence="1" type="primary">ctaB</name>
    <name type="ordered locus">ECH_1004</name>
</gene>
<accession>Q2GFJ2</accession>
<proteinExistence type="inferred from homology"/>
<keyword id="KW-0997">Cell inner membrane</keyword>
<keyword id="KW-1003">Cell membrane</keyword>
<keyword id="KW-0350">Heme biosynthesis</keyword>
<keyword id="KW-0472">Membrane</keyword>
<keyword id="KW-1185">Reference proteome</keyword>
<keyword id="KW-0808">Transferase</keyword>
<keyword id="KW-0812">Transmembrane</keyword>
<keyword id="KW-1133">Transmembrane helix</keyword>
<sequence length="295" mass="32816">MSSKCESVKPQLVNEVLGYWDLLKPKIMYLVVLTGITGMIIAPGNIHPFIGIISTLCIALGSGAAGAINMWYDSDIDALMQRTKNRPIPSGKIARSTAIELGLVLSVISVTVMMIAVNYLSGILLAISIGFYSLVYTMYLKRRTPQNIVIGGIAGALPPIIGWTSVTNAISIESLILFLIIFVWTPPHFWALSLLNYQEYEKAKVPMLPVTHGIFTTKIYILVYSIILFIITLLPGIFLKDCLLYETCAIPLGMTFVFHAFKVFVSINHYKYKAMFTYSIAYLFILFICIIISSF</sequence>
<protein>
    <recommendedName>
        <fullName evidence="1">Protoheme IX farnesyltransferase</fullName>
        <ecNumber evidence="1">2.5.1.141</ecNumber>
    </recommendedName>
    <alternativeName>
        <fullName evidence="1">Heme B farnesyltransferase</fullName>
    </alternativeName>
    <alternativeName>
        <fullName evidence="1">Heme O synthase</fullName>
    </alternativeName>
</protein>
<reference key="1">
    <citation type="journal article" date="2006" name="PLoS Genet.">
        <title>Comparative genomics of emerging human ehrlichiosis agents.</title>
        <authorList>
            <person name="Dunning Hotopp J.C."/>
            <person name="Lin M."/>
            <person name="Madupu R."/>
            <person name="Crabtree J."/>
            <person name="Angiuoli S.V."/>
            <person name="Eisen J.A."/>
            <person name="Seshadri R."/>
            <person name="Ren Q."/>
            <person name="Wu M."/>
            <person name="Utterback T.R."/>
            <person name="Smith S."/>
            <person name="Lewis M."/>
            <person name="Khouri H."/>
            <person name="Zhang C."/>
            <person name="Niu H."/>
            <person name="Lin Q."/>
            <person name="Ohashi N."/>
            <person name="Zhi N."/>
            <person name="Nelson W.C."/>
            <person name="Brinkac L.M."/>
            <person name="Dodson R.J."/>
            <person name="Rosovitz M.J."/>
            <person name="Sundaram J.P."/>
            <person name="Daugherty S.C."/>
            <person name="Davidsen T."/>
            <person name="Durkin A.S."/>
            <person name="Gwinn M.L."/>
            <person name="Haft D.H."/>
            <person name="Selengut J.D."/>
            <person name="Sullivan S.A."/>
            <person name="Zafar N."/>
            <person name="Zhou L."/>
            <person name="Benahmed F."/>
            <person name="Forberger H."/>
            <person name="Halpin R."/>
            <person name="Mulligan S."/>
            <person name="Robinson J."/>
            <person name="White O."/>
            <person name="Rikihisa Y."/>
            <person name="Tettelin H."/>
        </authorList>
    </citation>
    <scope>NUCLEOTIDE SEQUENCE [LARGE SCALE GENOMIC DNA]</scope>
    <source>
        <strain>ATCC CRL-10679 / Arkansas</strain>
    </source>
</reference>
<comment type="function">
    <text evidence="1">Converts heme B (protoheme IX) to heme O by substitution of the vinyl group on carbon 2 of heme B porphyrin ring with a hydroxyethyl farnesyl side group.</text>
</comment>
<comment type="catalytic activity">
    <reaction evidence="1">
        <text>heme b + (2E,6E)-farnesyl diphosphate + H2O = Fe(II)-heme o + diphosphate</text>
        <dbReference type="Rhea" id="RHEA:28070"/>
        <dbReference type="ChEBI" id="CHEBI:15377"/>
        <dbReference type="ChEBI" id="CHEBI:33019"/>
        <dbReference type="ChEBI" id="CHEBI:60344"/>
        <dbReference type="ChEBI" id="CHEBI:60530"/>
        <dbReference type="ChEBI" id="CHEBI:175763"/>
        <dbReference type="EC" id="2.5.1.141"/>
    </reaction>
</comment>
<comment type="pathway">
    <text evidence="1">Porphyrin-containing compound metabolism; heme O biosynthesis; heme O from protoheme: step 1/1.</text>
</comment>
<comment type="subcellular location">
    <subcellularLocation>
        <location evidence="1">Cell inner membrane</location>
        <topology evidence="1">Multi-pass membrane protein</topology>
    </subcellularLocation>
</comment>
<comment type="miscellaneous">
    <text evidence="1">Carbon 2 of the heme B porphyrin ring is defined according to the Fischer nomenclature.</text>
</comment>
<comment type="similarity">
    <text evidence="1">Belongs to the UbiA prenyltransferase family. Protoheme IX farnesyltransferase subfamily.</text>
</comment>
<evidence type="ECO:0000255" key="1">
    <source>
        <dbReference type="HAMAP-Rule" id="MF_00154"/>
    </source>
</evidence>
<dbReference type="EC" id="2.5.1.141" evidence="1"/>
<dbReference type="EMBL" id="CP000236">
    <property type="protein sequence ID" value="ABD44990.1"/>
    <property type="molecule type" value="Genomic_DNA"/>
</dbReference>
<dbReference type="RefSeq" id="WP_011452943.1">
    <property type="nucleotide sequence ID" value="NC_007799.1"/>
</dbReference>
<dbReference type="SMR" id="Q2GFJ2"/>
<dbReference type="STRING" id="205920.ECH_1004"/>
<dbReference type="KEGG" id="ech:ECH_1004"/>
<dbReference type="eggNOG" id="COG0109">
    <property type="taxonomic scope" value="Bacteria"/>
</dbReference>
<dbReference type="HOGENOM" id="CLU_029631_0_2_5"/>
<dbReference type="OrthoDB" id="9814417at2"/>
<dbReference type="UniPathway" id="UPA00834">
    <property type="reaction ID" value="UER00712"/>
</dbReference>
<dbReference type="Proteomes" id="UP000008320">
    <property type="component" value="Chromosome"/>
</dbReference>
<dbReference type="GO" id="GO:0005886">
    <property type="term" value="C:plasma membrane"/>
    <property type="evidence" value="ECO:0007669"/>
    <property type="project" value="UniProtKB-SubCell"/>
</dbReference>
<dbReference type="GO" id="GO:0008495">
    <property type="term" value="F:protoheme IX farnesyltransferase activity"/>
    <property type="evidence" value="ECO:0007669"/>
    <property type="project" value="UniProtKB-UniRule"/>
</dbReference>
<dbReference type="GO" id="GO:0048034">
    <property type="term" value="P:heme O biosynthetic process"/>
    <property type="evidence" value="ECO:0007669"/>
    <property type="project" value="UniProtKB-UniRule"/>
</dbReference>
<dbReference type="CDD" id="cd13957">
    <property type="entry name" value="PT_UbiA_Cox10"/>
    <property type="match status" value="1"/>
</dbReference>
<dbReference type="Gene3D" id="1.10.357.140">
    <property type="entry name" value="UbiA prenyltransferase"/>
    <property type="match status" value="1"/>
</dbReference>
<dbReference type="HAMAP" id="MF_00154">
    <property type="entry name" value="CyoE_CtaB"/>
    <property type="match status" value="1"/>
</dbReference>
<dbReference type="InterPro" id="IPR006369">
    <property type="entry name" value="Protohaem_IX_farnesylTrfase"/>
</dbReference>
<dbReference type="InterPro" id="IPR000537">
    <property type="entry name" value="UbiA_prenyltransferase"/>
</dbReference>
<dbReference type="InterPro" id="IPR030470">
    <property type="entry name" value="UbiA_prenylTrfase_CS"/>
</dbReference>
<dbReference type="InterPro" id="IPR044878">
    <property type="entry name" value="UbiA_sf"/>
</dbReference>
<dbReference type="NCBIfam" id="TIGR01473">
    <property type="entry name" value="cyoE_ctaB"/>
    <property type="match status" value="1"/>
</dbReference>
<dbReference type="NCBIfam" id="NF003349">
    <property type="entry name" value="PRK04375.1-2"/>
    <property type="match status" value="1"/>
</dbReference>
<dbReference type="PANTHER" id="PTHR43448:SF7">
    <property type="entry name" value="4-HYDROXYBENZOATE SOLANESYLTRANSFERASE"/>
    <property type="match status" value="1"/>
</dbReference>
<dbReference type="PANTHER" id="PTHR43448">
    <property type="entry name" value="PROTOHEME IX FARNESYLTRANSFERASE, MITOCHONDRIAL"/>
    <property type="match status" value="1"/>
</dbReference>
<dbReference type="Pfam" id="PF01040">
    <property type="entry name" value="UbiA"/>
    <property type="match status" value="1"/>
</dbReference>
<dbReference type="PROSITE" id="PS00943">
    <property type="entry name" value="UBIA"/>
    <property type="match status" value="1"/>
</dbReference>
<feature type="chain" id="PRO_0000327049" description="Protoheme IX farnesyltransferase">
    <location>
        <begin position="1"/>
        <end position="295"/>
    </location>
</feature>
<feature type="transmembrane region" description="Helical" evidence="1">
    <location>
        <begin position="27"/>
        <end position="47"/>
    </location>
</feature>
<feature type="transmembrane region" description="Helical" evidence="1">
    <location>
        <begin position="48"/>
        <end position="68"/>
    </location>
</feature>
<feature type="transmembrane region" description="Helical" evidence="1">
    <location>
        <begin position="93"/>
        <end position="115"/>
    </location>
</feature>
<feature type="transmembrane region" description="Helical" evidence="1">
    <location>
        <begin position="119"/>
        <end position="136"/>
    </location>
</feature>
<feature type="transmembrane region" description="Helical" evidence="1">
    <location>
        <begin position="147"/>
        <end position="167"/>
    </location>
</feature>
<feature type="transmembrane region" description="Helical" evidence="1">
    <location>
        <begin position="175"/>
        <end position="195"/>
    </location>
</feature>
<feature type="transmembrane region" description="Helical" evidence="1">
    <location>
        <begin position="219"/>
        <end position="239"/>
    </location>
</feature>
<feature type="transmembrane region" description="Helical" evidence="1">
    <location>
        <begin position="247"/>
        <end position="267"/>
    </location>
</feature>
<feature type="transmembrane region" description="Helical" evidence="1">
    <location>
        <begin position="275"/>
        <end position="295"/>
    </location>
</feature>
<name>COXX_EHRCR</name>
<organism>
    <name type="scientific">Ehrlichia chaffeensis (strain ATCC CRL-10679 / Arkansas)</name>
    <dbReference type="NCBI Taxonomy" id="205920"/>
    <lineage>
        <taxon>Bacteria</taxon>
        <taxon>Pseudomonadati</taxon>
        <taxon>Pseudomonadota</taxon>
        <taxon>Alphaproteobacteria</taxon>
        <taxon>Rickettsiales</taxon>
        <taxon>Anaplasmataceae</taxon>
        <taxon>Ehrlichia</taxon>
    </lineage>
</organism>